<protein>
    <recommendedName>
        <fullName evidence="1">Cysteine--tRNA ligase</fullName>
        <ecNumber evidence="1">6.1.1.16</ecNumber>
    </recommendedName>
    <alternativeName>
        <fullName evidence="1">Cysteinyl-tRNA synthetase</fullName>
        <shortName evidence="1">CysRS</shortName>
    </alternativeName>
</protein>
<accession>B2HJ21</accession>
<proteinExistence type="inferred from homology"/>
<reference key="1">
    <citation type="journal article" date="2008" name="Genome Res.">
        <title>Insights from the complete genome sequence of Mycobacterium marinum on the evolution of Mycobacterium tuberculosis.</title>
        <authorList>
            <person name="Stinear T.P."/>
            <person name="Seemann T."/>
            <person name="Harrison P.F."/>
            <person name="Jenkin G.A."/>
            <person name="Davies J.K."/>
            <person name="Johnson P.D."/>
            <person name="Abdellah Z."/>
            <person name="Arrowsmith C."/>
            <person name="Chillingworth T."/>
            <person name="Churcher C."/>
            <person name="Clarke K."/>
            <person name="Cronin A."/>
            <person name="Davis P."/>
            <person name="Goodhead I."/>
            <person name="Holroyd N."/>
            <person name="Jagels K."/>
            <person name="Lord A."/>
            <person name="Moule S."/>
            <person name="Mungall K."/>
            <person name="Norbertczak H."/>
            <person name="Quail M.A."/>
            <person name="Rabbinowitsch E."/>
            <person name="Walker D."/>
            <person name="White B."/>
            <person name="Whitehead S."/>
            <person name="Small P.L."/>
            <person name="Brosch R."/>
            <person name="Ramakrishnan L."/>
            <person name="Fischbach M.A."/>
            <person name="Parkhill J."/>
            <person name="Cole S.T."/>
        </authorList>
    </citation>
    <scope>NUCLEOTIDE SEQUENCE [LARGE SCALE GENOMIC DNA]</scope>
    <source>
        <strain>ATCC BAA-535 / M</strain>
    </source>
</reference>
<dbReference type="EC" id="6.1.1.16" evidence="1"/>
<dbReference type="EMBL" id="CP000854">
    <property type="protein sequence ID" value="ACC43484.1"/>
    <property type="molecule type" value="Genomic_DNA"/>
</dbReference>
<dbReference type="RefSeq" id="WP_012396602.1">
    <property type="nucleotide sequence ID" value="NC_010612.1"/>
</dbReference>
<dbReference type="SMR" id="B2HJ21"/>
<dbReference type="STRING" id="216594.MMAR_5080"/>
<dbReference type="KEGG" id="mmi:MMAR_5080"/>
<dbReference type="eggNOG" id="COG0215">
    <property type="taxonomic scope" value="Bacteria"/>
</dbReference>
<dbReference type="HOGENOM" id="CLU_013528_0_1_11"/>
<dbReference type="OrthoDB" id="9815130at2"/>
<dbReference type="Proteomes" id="UP000001190">
    <property type="component" value="Chromosome"/>
</dbReference>
<dbReference type="GO" id="GO:0005829">
    <property type="term" value="C:cytosol"/>
    <property type="evidence" value="ECO:0007669"/>
    <property type="project" value="TreeGrafter"/>
</dbReference>
<dbReference type="GO" id="GO:0005524">
    <property type="term" value="F:ATP binding"/>
    <property type="evidence" value="ECO:0007669"/>
    <property type="project" value="UniProtKB-UniRule"/>
</dbReference>
<dbReference type="GO" id="GO:0004817">
    <property type="term" value="F:cysteine-tRNA ligase activity"/>
    <property type="evidence" value="ECO:0007669"/>
    <property type="project" value="UniProtKB-UniRule"/>
</dbReference>
<dbReference type="GO" id="GO:0008270">
    <property type="term" value="F:zinc ion binding"/>
    <property type="evidence" value="ECO:0007669"/>
    <property type="project" value="UniProtKB-UniRule"/>
</dbReference>
<dbReference type="GO" id="GO:0006423">
    <property type="term" value="P:cysteinyl-tRNA aminoacylation"/>
    <property type="evidence" value="ECO:0007669"/>
    <property type="project" value="UniProtKB-UniRule"/>
</dbReference>
<dbReference type="CDD" id="cd00672">
    <property type="entry name" value="CysRS_core"/>
    <property type="match status" value="1"/>
</dbReference>
<dbReference type="FunFam" id="3.40.50.620:FF:000068">
    <property type="entry name" value="Cysteine--tRNA ligase"/>
    <property type="match status" value="1"/>
</dbReference>
<dbReference type="Gene3D" id="1.20.120.1910">
    <property type="entry name" value="Cysteine-tRNA ligase, C-terminal anti-codon recognition domain"/>
    <property type="match status" value="1"/>
</dbReference>
<dbReference type="Gene3D" id="3.40.50.620">
    <property type="entry name" value="HUPs"/>
    <property type="match status" value="1"/>
</dbReference>
<dbReference type="HAMAP" id="MF_00041">
    <property type="entry name" value="Cys_tRNA_synth"/>
    <property type="match status" value="1"/>
</dbReference>
<dbReference type="InterPro" id="IPR015803">
    <property type="entry name" value="Cys-tRNA-ligase"/>
</dbReference>
<dbReference type="InterPro" id="IPR015273">
    <property type="entry name" value="Cys-tRNA-synt_Ia_DALR"/>
</dbReference>
<dbReference type="InterPro" id="IPR024909">
    <property type="entry name" value="Cys-tRNA/MSH_ligase"/>
</dbReference>
<dbReference type="InterPro" id="IPR014729">
    <property type="entry name" value="Rossmann-like_a/b/a_fold"/>
</dbReference>
<dbReference type="InterPro" id="IPR032678">
    <property type="entry name" value="tRNA-synt_1_cat_dom"/>
</dbReference>
<dbReference type="InterPro" id="IPR009080">
    <property type="entry name" value="tRNAsynth_Ia_anticodon-bd"/>
</dbReference>
<dbReference type="NCBIfam" id="TIGR00435">
    <property type="entry name" value="cysS"/>
    <property type="match status" value="1"/>
</dbReference>
<dbReference type="PANTHER" id="PTHR10890:SF30">
    <property type="entry name" value="CYSTEINE--TRNA LIGASE"/>
    <property type="match status" value="1"/>
</dbReference>
<dbReference type="PANTHER" id="PTHR10890">
    <property type="entry name" value="CYSTEINYL-TRNA SYNTHETASE"/>
    <property type="match status" value="1"/>
</dbReference>
<dbReference type="Pfam" id="PF09190">
    <property type="entry name" value="DALR_2"/>
    <property type="match status" value="1"/>
</dbReference>
<dbReference type="Pfam" id="PF01406">
    <property type="entry name" value="tRNA-synt_1e"/>
    <property type="match status" value="1"/>
</dbReference>
<dbReference type="PRINTS" id="PR00983">
    <property type="entry name" value="TRNASYNTHCYS"/>
</dbReference>
<dbReference type="SMART" id="SM00840">
    <property type="entry name" value="DALR_2"/>
    <property type="match status" value="1"/>
</dbReference>
<dbReference type="SUPFAM" id="SSF47323">
    <property type="entry name" value="Anticodon-binding domain of a subclass of class I aminoacyl-tRNA synthetases"/>
    <property type="match status" value="1"/>
</dbReference>
<dbReference type="SUPFAM" id="SSF52374">
    <property type="entry name" value="Nucleotidylyl transferase"/>
    <property type="match status" value="1"/>
</dbReference>
<name>SYC_MYCMM</name>
<gene>
    <name evidence="1" type="primary">cysS</name>
    <name type="ordered locus">MMAR_5080</name>
</gene>
<evidence type="ECO:0000255" key="1">
    <source>
        <dbReference type="HAMAP-Rule" id="MF_00041"/>
    </source>
</evidence>
<organism>
    <name type="scientific">Mycobacterium marinum (strain ATCC BAA-535 / M)</name>
    <dbReference type="NCBI Taxonomy" id="216594"/>
    <lineage>
        <taxon>Bacteria</taxon>
        <taxon>Bacillati</taxon>
        <taxon>Actinomycetota</taxon>
        <taxon>Actinomycetes</taxon>
        <taxon>Mycobacteriales</taxon>
        <taxon>Mycobacteriaceae</taxon>
        <taxon>Mycobacterium</taxon>
        <taxon>Mycobacterium ulcerans group</taxon>
    </lineage>
</organism>
<sequence>MTERAGLRLHDTAAGAVRDFVPLREGHVSIYLCGATVQGLPHIGHVRSGVAFDILRRWLMARGFDVAFIRNVTDIDDKILNKAAAAERPWWEWAATYERAFTAAYDALDVLPPSAEPRATGHVTQMVELIERLIERGHAYAGGGDVYFDVLSYPDYGQLSGHKVDDVHQGEGVATGKRDQRDFTLWKGAKPGEPSWPTPWGRGRPGWHLECSAMARTYLGAQFDIHCGGMDLIFPHHENEIAQSRAAGDGFARYWLHNGWVTMGGEKMSKSLGNVLAIPTMLQRVRPAELRYYLGSAHYRSMLEFSDIALQDAVNAYVGVEEFLHRVRSRAGVVVVGDWTPRFAAALDDDLSVPIALAEIHHTRAEGNRALDAGDHDAALQSASSIRAMMGILGCDPLDERWESRDETSAALAAVDVLVQAELENRQKAREERNWALADEIRNRLKNAGIEVTDTADGPQWLLGGDGK</sequence>
<keyword id="KW-0030">Aminoacyl-tRNA synthetase</keyword>
<keyword id="KW-0067">ATP-binding</keyword>
<keyword id="KW-0963">Cytoplasm</keyword>
<keyword id="KW-0436">Ligase</keyword>
<keyword id="KW-0479">Metal-binding</keyword>
<keyword id="KW-0547">Nucleotide-binding</keyword>
<keyword id="KW-0648">Protein biosynthesis</keyword>
<keyword id="KW-1185">Reference proteome</keyword>
<keyword id="KW-0862">Zinc</keyword>
<comment type="catalytic activity">
    <reaction evidence="1">
        <text>tRNA(Cys) + L-cysteine + ATP = L-cysteinyl-tRNA(Cys) + AMP + diphosphate</text>
        <dbReference type="Rhea" id="RHEA:17773"/>
        <dbReference type="Rhea" id="RHEA-COMP:9661"/>
        <dbReference type="Rhea" id="RHEA-COMP:9679"/>
        <dbReference type="ChEBI" id="CHEBI:30616"/>
        <dbReference type="ChEBI" id="CHEBI:33019"/>
        <dbReference type="ChEBI" id="CHEBI:35235"/>
        <dbReference type="ChEBI" id="CHEBI:78442"/>
        <dbReference type="ChEBI" id="CHEBI:78517"/>
        <dbReference type="ChEBI" id="CHEBI:456215"/>
        <dbReference type="EC" id="6.1.1.16"/>
    </reaction>
</comment>
<comment type="cofactor">
    <cofactor evidence="1">
        <name>Zn(2+)</name>
        <dbReference type="ChEBI" id="CHEBI:29105"/>
    </cofactor>
    <text evidence="1">Binds 1 zinc ion per subunit.</text>
</comment>
<comment type="subunit">
    <text evidence="1">Monomer.</text>
</comment>
<comment type="subcellular location">
    <subcellularLocation>
        <location evidence="1">Cytoplasm</location>
    </subcellularLocation>
</comment>
<comment type="similarity">
    <text evidence="1">Belongs to the class-I aminoacyl-tRNA synthetase family.</text>
</comment>
<feature type="chain" id="PRO_1000090853" description="Cysteine--tRNA ligase">
    <location>
        <begin position="1"/>
        <end position="468"/>
    </location>
</feature>
<feature type="short sequence motif" description="'HIGH' region">
    <location>
        <begin position="35"/>
        <end position="45"/>
    </location>
</feature>
<feature type="short sequence motif" description="'KMSKS' region">
    <location>
        <begin position="267"/>
        <end position="271"/>
    </location>
</feature>
<feature type="binding site" evidence="1">
    <location>
        <position position="33"/>
    </location>
    <ligand>
        <name>Zn(2+)</name>
        <dbReference type="ChEBI" id="CHEBI:29105"/>
    </ligand>
</feature>
<feature type="binding site" evidence="1">
    <location>
        <position position="211"/>
    </location>
    <ligand>
        <name>Zn(2+)</name>
        <dbReference type="ChEBI" id="CHEBI:29105"/>
    </ligand>
</feature>
<feature type="binding site" evidence="1">
    <location>
        <position position="236"/>
    </location>
    <ligand>
        <name>Zn(2+)</name>
        <dbReference type="ChEBI" id="CHEBI:29105"/>
    </ligand>
</feature>
<feature type="binding site" evidence="1">
    <location>
        <position position="240"/>
    </location>
    <ligand>
        <name>Zn(2+)</name>
        <dbReference type="ChEBI" id="CHEBI:29105"/>
    </ligand>
</feature>
<feature type="binding site" evidence="1">
    <location>
        <position position="270"/>
    </location>
    <ligand>
        <name>ATP</name>
        <dbReference type="ChEBI" id="CHEBI:30616"/>
    </ligand>
</feature>